<name>NDK_ALBFT</name>
<reference key="1">
    <citation type="submission" date="2006-02" db="EMBL/GenBank/DDBJ databases">
        <title>Complete sequence of chromosome of Rhodoferax ferrireducens DSM 15236.</title>
        <authorList>
            <person name="Copeland A."/>
            <person name="Lucas S."/>
            <person name="Lapidus A."/>
            <person name="Barry K."/>
            <person name="Detter J.C."/>
            <person name="Glavina del Rio T."/>
            <person name="Hammon N."/>
            <person name="Israni S."/>
            <person name="Pitluck S."/>
            <person name="Brettin T."/>
            <person name="Bruce D."/>
            <person name="Han C."/>
            <person name="Tapia R."/>
            <person name="Gilna P."/>
            <person name="Kiss H."/>
            <person name="Schmutz J."/>
            <person name="Larimer F."/>
            <person name="Land M."/>
            <person name="Kyrpides N."/>
            <person name="Ivanova N."/>
            <person name="Richardson P."/>
        </authorList>
    </citation>
    <scope>NUCLEOTIDE SEQUENCE [LARGE SCALE GENOMIC DNA]</scope>
    <source>
        <strain>ATCC BAA-621 / DSM 15236 / T118</strain>
    </source>
</reference>
<comment type="function">
    <text evidence="1">Major role in the synthesis of nucleoside triphosphates other than ATP. The ATP gamma phosphate is transferred to the NDP beta phosphate via a ping-pong mechanism, using a phosphorylated active-site intermediate.</text>
</comment>
<comment type="catalytic activity">
    <reaction evidence="1">
        <text>a 2'-deoxyribonucleoside 5'-diphosphate + ATP = a 2'-deoxyribonucleoside 5'-triphosphate + ADP</text>
        <dbReference type="Rhea" id="RHEA:44640"/>
        <dbReference type="ChEBI" id="CHEBI:30616"/>
        <dbReference type="ChEBI" id="CHEBI:61560"/>
        <dbReference type="ChEBI" id="CHEBI:73316"/>
        <dbReference type="ChEBI" id="CHEBI:456216"/>
        <dbReference type="EC" id="2.7.4.6"/>
    </reaction>
</comment>
<comment type="catalytic activity">
    <reaction evidence="1">
        <text>a ribonucleoside 5'-diphosphate + ATP = a ribonucleoside 5'-triphosphate + ADP</text>
        <dbReference type="Rhea" id="RHEA:18113"/>
        <dbReference type="ChEBI" id="CHEBI:30616"/>
        <dbReference type="ChEBI" id="CHEBI:57930"/>
        <dbReference type="ChEBI" id="CHEBI:61557"/>
        <dbReference type="ChEBI" id="CHEBI:456216"/>
        <dbReference type="EC" id="2.7.4.6"/>
    </reaction>
</comment>
<comment type="cofactor">
    <cofactor evidence="1">
        <name>Mg(2+)</name>
        <dbReference type="ChEBI" id="CHEBI:18420"/>
    </cofactor>
</comment>
<comment type="subunit">
    <text evidence="1">Homotetramer.</text>
</comment>
<comment type="subcellular location">
    <subcellularLocation>
        <location evidence="1">Cytoplasm</location>
    </subcellularLocation>
</comment>
<comment type="similarity">
    <text evidence="1">Belongs to the NDK family.</text>
</comment>
<feature type="chain" id="PRO_0000242510" description="Nucleoside diphosphate kinase">
    <location>
        <begin position="1"/>
        <end position="141"/>
    </location>
</feature>
<feature type="active site" description="Pros-phosphohistidine intermediate" evidence="1">
    <location>
        <position position="117"/>
    </location>
</feature>
<feature type="binding site" evidence="1">
    <location>
        <position position="11"/>
    </location>
    <ligand>
        <name>ATP</name>
        <dbReference type="ChEBI" id="CHEBI:30616"/>
    </ligand>
</feature>
<feature type="binding site" evidence="1">
    <location>
        <position position="59"/>
    </location>
    <ligand>
        <name>ATP</name>
        <dbReference type="ChEBI" id="CHEBI:30616"/>
    </ligand>
</feature>
<feature type="binding site" evidence="1">
    <location>
        <position position="87"/>
    </location>
    <ligand>
        <name>ATP</name>
        <dbReference type="ChEBI" id="CHEBI:30616"/>
    </ligand>
</feature>
<feature type="binding site" evidence="1">
    <location>
        <position position="93"/>
    </location>
    <ligand>
        <name>ATP</name>
        <dbReference type="ChEBI" id="CHEBI:30616"/>
    </ligand>
</feature>
<feature type="binding site" evidence="1">
    <location>
        <position position="104"/>
    </location>
    <ligand>
        <name>ATP</name>
        <dbReference type="ChEBI" id="CHEBI:30616"/>
    </ligand>
</feature>
<feature type="binding site" evidence="1">
    <location>
        <position position="114"/>
    </location>
    <ligand>
        <name>ATP</name>
        <dbReference type="ChEBI" id="CHEBI:30616"/>
    </ligand>
</feature>
<evidence type="ECO:0000255" key="1">
    <source>
        <dbReference type="HAMAP-Rule" id="MF_00451"/>
    </source>
</evidence>
<keyword id="KW-0067">ATP-binding</keyword>
<keyword id="KW-0963">Cytoplasm</keyword>
<keyword id="KW-0418">Kinase</keyword>
<keyword id="KW-0460">Magnesium</keyword>
<keyword id="KW-0479">Metal-binding</keyword>
<keyword id="KW-0546">Nucleotide metabolism</keyword>
<keyword id="KW-0547">Nucleotide-binding</keyword>
<keyword id="KW-0597">Phosphoprotein</keyword>
<keyword id="KW-1185">Reference proteome</keyword>
<keyword id="KW-0808">Transferase</keyword>
<protein>
    <recommendedName>
        <fullName evidence="1">Nucleoside diphosphate kinase</fullName>
        <shortName evidence="1">NDK</shortName>
        <shortName evidence="1">NDP kinase</shortName>
        <ecNumber evidence="1">2.7.4.6</ecNumber>
    </recommendedName>
    <alternativeName>
        <fullName evidence="1">Nucleoside-2-P kinase</fullName>
    </alternativeName>
</protein>
<accession>Q21W24</accession>
<dbReference type="EC" id="2.7.4.6" evidence="1"/>
<dbReference type="EMBL" id="CP000267">
    <property type="protein sequence ID" value="ABD70029.1"/>
    <property type="molecule type" value="Genomic_DNA"/>
</dbReference>
<dbReference type="RefSeq" id="WP_011464597.1">
    <property type="nucleotide sequence ID" value="NC_007908.1"/>
</dbReference>
<dbReference type="SMR" id="Q21W24"/>
<dbReference type="STRING" id="338969.Rfer_2311"/>
<dbReference type="KEGG" id="rfr:Rfer_2311"/>
<dbReference type="eggNOG" id="COG0105">
    <property type="taxonomic scope" value="Bacteria"/>
</dbReference>
<dbReference type="HOGENOM" id="CLU_060216_8_1_4"/>
<dbReference type="OrthoDB" id="9801161at2"/>
<dbReference type="Proteomes" id="UP000008332">
    <property type="component" value="Chromosome"/>
</dbReference>
<dbReference type="GO" id="GO:0005737">
    <property type="term" value="C:cytoplasm"/>
    <property type="evidence" value="ECO:0007669"/>
    <property type="project" value="UniProtKB-SubCell"/>
</dbReference>
<dbReference type="GO" id="GO:0005524">
    <property type="term" value="F:ATP binding"/>
    <property type="evidence" value="ECO:0007669"/>
    <property type="project" value="UniProtKB-UniRule"/>
</dbReference>
<dbReference type="GO" id="GO:0046872">
    <property type="term" value="F:metal ion binding"/>
    <property type="evidence" value="ECO:0007669"/>
    <property type="project" value="UniProtKB-KW"/>
</dbReference>
<dbReference type="GO" id="GO:0004550">
    <property type="term" value="F:nucleoside diphosphate kinase activity"/>
    <property type="evidence" value="ECO:0007669"/>
    <property type="project" value="UniProtKB-UniRule"/>
</dbReference>
<dbReference type="GO" id="GO:0006241">
    <property type="term" value="P:CTP biosynthetic process"/>
    <property type="evidence" value="ECO:0007669"/>
    <property type="project" value="UniProtKB-UniRule"/>
</dbReference>
<dbReference type="GO" id="GO:0006183">
    <property type="term" value="P:GTP biosynthetic process"/>
    <property type="evidence" value="ECO:0007669"/>
    <property type="project" value="UniProtKB-UniRule"/>
</dbReference>
<dbReference type="GO" id="GO:0006228">
    <property type="term" value="P:UTP biosynthetic process"/>
    <property type="evidence" value="ECO:0007669"/>
    <property type="project" value="UniProtKB-UniRule"/>
</dbReference>
<dbReference type="CDD" id="cd04413">
    <property type="entry name" value="NDPk_I"/>
    <property type="match status" value="1"/>
</dbReference>
<dbReference type="FunFam" id="3.30.70.141:FF:000001">
    <property type="entry name" value="Nucleoside diphosphate kinase"/>
    <property type="match status" value="1"/>
</dbReference>
<dbReference type="Gene3D" id="3.30.70.141">
    <property type="entry name" value="Nucleoside diphosphate kinase-like domain"/>
    <property type="match status" value="1"/>
</dbReference>
<dbReference type="HAMAP" id="MF_00451">
    <property type="entry name" value="NDP_kinase"/>
    <property type="match status" value="1"/>
</dbReference>
<dbReference type="InterPro" id="IPR034907">
    <property type="entry name" value="NDK-like_dom"/>
</dbReference>
<dbReference type="InterPro" id="IPR036850">
    <property type="entry name" value="NDK-like_dom_sf"/>
</dbReference>
<dbReference type="InterPro" id="IPR001564">
    <property type="entry name" value="Nucleoside_diP_kinase"/>
</dbReference>
<dbReference type="NCBIfam" id="NF001908">
    <property type="entry name" value="PRK00668.1"/>
    <property type="match status" value="1"/>
</dbReference>
<dbReference type="PANTHER" id="PTHR46161">
    <property type="entry name" value="NUCLEOSIDE DIPHOSPHATE KINASE"/>
    <property type="match status" value="1"/>
</dbReference>
<dbReference type="PANTHER" id="PTHR46161:SF3">
    <property type="entry name" value="NUCLEOSIDE DIPHOSPHATE KINASE DDB_G0292928-RELATED"/>
    <property type="match status" value="1"/>
</dbReference>
<dbReference type="Pfam" id="PF00334">
    <property type="entry name" value="NDK"/>
    <property type="match status" value="1"/>
</dbReference>
<dbReference type="PRINTS" id="PR01243">
    <property type="entry name" value="NUCDPKINASE"/>
</dbReference>
<dbReference type="SMART" id="SM00562">
    <property type="entry name" value="NDK"/>
    <property type="match status" value="1"/>
</dbReference>
<dbReference type="SUPFAM" id="SSF54919">
    <property type="entry name" value="Nucleoside diphosphate kinase, NDK"/>
    <property type="match status" value="1"/>
</dbReference>
<dbReference type="PROSITE" id="PS51374">
    <property type="entry name" value="NDPK_LIKE"/>
    <property type="match status" value="1"/>
</dbReference>
<gene>
    <name evidence="1" type="primary">ndk</name>
    <name type="ordered locus">Rfer_2311</name>
</gene>
<proteinExistence type="inferred from homology"/>
<organism>
    <name type="scientific">Albidiferax ferrireducens (strain ATCC BAA-621 / DSM 15236 / T118)</name>
    <name type="common">Rhodoferax ferrireducens</name>
    <dbReference type="NCBI Taxonomy" id="338969"/>
    <lineage>
        <taxon>Bacteria</taxon>
        <taxon>Pseudomonadati</taxon>
        <taxon>Pseudomonadota</taxon>
        <taxon>Betaproteobacteria</taxon>
        <taxon>Burkholderiales</taxon>
        <taxon>Comamonadaceae</taxon>
        <taxon>Rhodoferax</taxon>
    </lineage>
</organism>
<sequence>MTVERTLSIIKPDAVAKNVIGQIYARFEAAGLKVVAAKMAHLSAREAQAFYAVHKDRPFFKDLVDFMISGPVMIQALEGENAVLKNRDLMGATDPKKAAPGTIRADFADSIDANAVHGSDAAETAAVEIAFFFPGMNVYSR</sequence>